<protein>
    <recommendedName>
        <fullName>Cyclin-T</fullName>
    </recommendedName>
</protein>
<dbReference type="EMBL" id="AF051933">
    <property type="protein sequence ID" value="AAC73052.1"/>
    <property type="molecule type" value="mRNA"/>
</dbReference>
<dbReference type="EMBL" id="AE014296">
    <property type="protein sequence ID" value="AAF49325.1"/>
    <property type="molecule type" value="Genomic_DNA"/>
</dbReference>
<dbReference type="EMBL" id="AE014296">
    <property type="protein sequence ID" value="AAS64974.1"/>
    <property type="molecule type" value="Genomic_DNA"/>
</dbReference>
<dbReference type="PIR" id="T13033">
    <property type="entry name" value="T13033"/>
</dbReference>
<dbReference type="RefSeq" id="NP_001261992.1">
    <molecule id="O96433-1"/>
    <property type="nucleotide sequence ID" value="NM_001275063.2"/>
</dbReference>
<dbReference type="RefSeq" id="NP_001261993.1">
    <molecule id="O96433-2"/>
    <property type="nucleotide sequence ID" value="NM_001275064.2"/>
</dbReference>
<dbReference type="RefSeq" id="NP_524127.2">
    <molecule id="O96433-1"/>
    <property type="nucleotide sequence ID" value="NM_079403.4"/>
</dbReference>
<dbReference type="RefSeq" id="NP_996117.1">
    <molecule id="O96433-2"/>
    <property type="nucleotide sequence ID" value="NM_206395.3"/>
</dbReference>
<dbReference type="SMR" id="O96433"/>
<dbReference type="BioGRID" id="65249">
    <property type="interactions" value="12"/>
</dbReference>
<dbReference type="ComplexPortal" id="CPX-2432">
    <property type="entry name" value="Positive transcription elongation factor B complex"/>
</dbReference>
<dbReference type="DIP" id="DIP-29892N"/>
<dbReference type="FunCoup" id="O96433">
    <property type="interactions" value="223"/>
</dbReference>
<dbReference type="IntAct" id="O96433">
    <property type="interactions" value="8"/>
</dbReference>
<dbReference type="STRING" id="7227.FBpp0305335"/>
<dbReference type="iPTMnet" id="O96433"/>
<dbReference type="PaxDb" id="7227-FBpp0305335"/>
<dbReference type="EnsemblMetazoa" id="FBtr0075205">
    <molecule id="O96433-1"/>
    <property type="protein sequence ID" value="FBpp0074968"/>
    <property type="gene ID" value="FBgn0025455"/>
</dbReference>
<dbReference type="EnsemblMetazoa" id="FBtr0075206">
    <molecule id="O96433-2"/>
    <property type="protein sequence ID" value="FBpp0089275"/>
    <property type="gene ID" value="FBgn0025455"/>
</dbReference>
<dbReference type="EnsemblMetazoa" id="FBtr0333124">
    <molecule id="O96433-1"/>
    <property type="protein sequence ID" value="FBpp0305335"/>
    <property type="gene ID" value="FBgn0025455"/>
</dbReference>
<dbReference type="EnsemblMetazoa" id="FBtr0333125">
    <molecule id="O96433-2"/>
    <property type="protein sequence ID" value="FBpp0305336"/>
    <property type="gene ID" value="FBgn0025455"/>
</dbReference>
<dbReference type="GeneID" id="39961"/>
<dbReference type="KEGG" id="dme:Dmel_CG6292"/>
<dbReference type="AGR" id="FB:FBgn0025455"/>
<dbReference type="CTD" id="13067"/>
<dbReference type="FlyBase" id="FBgn0025455">
    <property type="gene designation" value="CycT"/>
</dbReference>
<dbReference type="VEuPathDB" id="VectorBase:FBgn0025455"/>
<dbReference type="eggNOG" id="KOG0834">
    <property type="taxonomic scope" value="Eukaryota"/>
</dbReference>
<dbReference type="GeneTree" id="ENSGT00940000170249"/>
<dbReference type="HOGENOM" id="CLU_283750_0_0_1"/>
<dbReference type="InParanoid" id="O96433"/>
<dbReference type="OMA" id="NKPKEDW"/>
<dbReference type="OrthoDB" id="25002at2759"/>
<dbReference type="PhylomeDB" id="O96433"/>
<dbReference type="Reactome" id="R-DME-112382">
    <property type="pathway name" value="Formation of RNA Pol II elongation complex"/>
</dbReference>
<dbReference type="Reactome" id="R-DME-2173796">
    <property type="pathway name" value="SMAD2/SMAD3:SMAD4 heterotrimer regulates transcription"/>
</dbReference>
<dbReference type="Reactome" id="R-DME-674695">
    <property type="pathway name" value="RNA Polymerase II Pre-transcription Events"/>
</dbReference>
<dbReference type="Reactome" id="R-DME-6796648">
    <property type="pathway name" value="TP53 Regulates Transcription of DNA Repair Genes"/>
</dbReference>
<dbReference type="Reactome" id="R-DME-6807505">
    <property type="pathway name" value="RNA polymerase II transcribes snRNA genes"/>
</dbReference>
<dbReference type="Reactome" id="R-DME-75955">
    <property type="pathway name" value="RNA Polymerase II Transcription Elongation"/>
</dbReference>
<dbReference type="Reactome" id="R-DME-9018519">
    <property type="pathway name" value="Estrogen-dependent gene expression"/>
</dbReference>
<dbReference type="SignaLink" id="O96433"/>
<dbReference type="BioGRID-ORCS" id="39961">
    <property type="hits" value="0 hits in 3 CRISPR screens"/>
</dbReference>
<dbReference type="GenomeRNAi" id="39961"/>
<dbReference type="PRO" id="PR:O96433"/>
<dbReference type="Proteomes" id="UP000000803">
    <property type="component" value="Chromosome 3L"/>
</dbReference>
<dbReference type="Bgee" id="FBgn0025455">
    <property type="expression patterns" value="Expressed in indirect flight muscle cell (Drosophila) in body wall and 294 other cell types or tissues"/>
</dbReference>
<dbReference type="ExpressionAtlas" id="O96433">
    <property type="expression patterns" value="baseline and differential"/>
</dbReference>
<dbReference type="GO" id="GO:0008024">
    <property type="term" value="C:cyclin/CDK positive transcription elongation factor complex"/>
    <property type="evidence" value="ECO:0000318"/>
    <property type="project" value="GO_Central"/>
</dbReference>
<dbReference type="GO" id="GO:0005634">
    <property type="term" value="C:nucleus"/>
    <property type="evidence" value="ECO:0000314"/>
    <property type="project" value="FlyBase"/>
</dbReference>
<dbReference type="GO" id="GO:0070691">
    <property type="term" value="C:P-TEFb complex"/>
    <property type="evidence" value="ECO:0000353"/>
    <property type="project" value="FlyBase"/>
</dbReference>
<dbReference type="GO" id="GO:0005700">
    <property type="term" value="C:polytene chromosome"/>
    <property type="evidence" value="ECO:0000314"/>
    <property type="project" value="FlyBase"/>
</dbReference>
<dbReference type="GO" id="GO:0005703">
    <property type="term" value="C:polytene chromosome puff"/>
    <property type="evidence" value="ECO:0000314"/>
    <property type="project" value="FlyBase"/>
</dbReference>
<dbReference type="GO" id="GO:0032783">
    <property type="term" value="C:super elongation complex"/>
    <property type="evidence" value="ECO:0000353"/>
    <property type="project" value="FlyBase"/>
</dbReference>
<dbReference type="GO" id="GO:0008023">
    <property type="term" value="C:transcription elongation factor complex"/>
    <property type="evidence" value="ECO:0000314"/>
    <property type="project" value="UniProtKB"/>
</dbReference>
<dbReference type="GO" id="GO:0061575">
    <property type="term" value="F:cyclin-dependent protein serine/threonine kinase activator activity"/>
    <property type="evidence" value="ECO:0000318"/>
    <property type="project" value="GO_Central"/>
</dbReference>
<dbReference type="GO" id="GO:0016538">
    <property type="term" value="F:cyclin-dependent protein serine/threonine kinase regulator activity"/>
    <property type="evidence" value="ECO:0000314"/>
    <property type="project" value="FlyBase"/>
</dbReference>
<dbReference type="GO" id="GO:0006351">
    <property type="term" value="P:DNA-templated transcription"/>
    <property type="evidence" value="ECO:0000314"/>
    <property type="project" value="FlyBase"/>
</dbReference>
<dbReference type="GO" id="GO:0032786">
    <property type="term" value="P:positive regulation of DNA-templated transcription, elongation"/>
    <property type="evidence" value="ECO:0000318"/>
    <property type="project" value="GO_Central"/>
</dbReference>
<dbReference type="GO" id="GO:0045944">
    <property type="term" value="P:positive regulation of transcription by RNA polymerase II"/>
    <property type="evidence" value="ECO:0000318"/>
    <property type="project" value="GO_Central"/>
</dbReference>
<dbReference type="GO" id="GO:0032968">
    <property type="term" value="P:positive regulation of transcription elongation by RNA polymerase II"/>
    <property type="evidence" value="ECO:0000314"/>
    <property type="project" value="FlyBase"/>
</dbReference>
<dbReference type="GO" id="GO:0009408">
    <property type="term" value="P:response to heat"/>
    <property type="evidence" value="ECO:0000314"/>
    <property type="project" value="FlyBase"/>
</dbReference>
<dbReference type="GO" id="GO:0007419">
    <property type="term" value="P:ventral cord development"/>
    <property type="evidence" value="ECO:0007001"/>
    <property type="project" value="FlyBase"/>
</dbReference>
<dbReference type="CDD" id="cd20538">
    <property type="entry name" value="CYCLIN_CCNT_rpt1"/>
    <property type="match status" value="1"/>
</dbReference>
<dbReference type="CDD" id="cd20539">
    <property type="entry name" value="CYCLIN_CCNT_rpt2"/>
    <property type="match status" value="1"/>
</dbReference>
<dbReference type="FunFam" id="1.10.472.10:FF:000004">
    <property type="entry name" value="Cyclin T2"/>
    <property type="match status" value="1"/>
</dbReference>
<dbReference type="Gene3D" id="1.10.472.10">
    <property type="entry name" value="Cyclin-like"/>
    <property type="match status" value="2"/>
</dbReference>
<dbReference type="InterPro" id="IPR013763">
    <property type="entry name" value="Cyclin-like_dom"/>
</dbReference>
<dbReference type="InterPro" id="IPR036915">
    <property type="entry name" value="Cyclin-like_sf"/>
</dbReference>
<dbReference type="InterPro" id="IPR043198">
    <property type="entry name" value="Cyclin/Ssn8"/>
</dbReference>
<dbReference type="InterPro" id="IPR006671">
    <property type="entry name" value="Cyclin_N"/>
</dbReference>
<dbReference type="PANTHER" id="PTHR10026">
    <property type="entry name" value="CYCLIN"/>
    <property type="match status" value="1"/>
</dbReference>
<dbReference type="Pfam" id="PF00134">
    <property type="entry name" value="Cyclin_N"/>
    <property type="match status" value="1"/>
</dbReference>
<dbReference type="Pfam" id="PF21797">
    <property type="entry name" value="CycT2-like_C"/>
    <property type="match status" value="1"/>
</dbReference>
<dbReference type="SMART" id="SM00385">
    <property type="entry name" value="CYCLIN"/>
    <property type="match status" value="2"/>
</dbReference>
<dbReference type="SUPFAM" id="SSF47954">
    <property type="entry name" value="Cyclin-like"/>
    <property type="match status" value="2"/>
</dbReference>
<proteinExistence type="evidence at protein level"/>
<evidence type="ECO:0000256" key="1">
    <source>
        <dbReference type="SAM" id="MobiDB-lite"/>
    </source>
</evidence>
<evidence type="ECO:0000269" key="2">
    <source>
    </source>
</evidence>
<evidence type="ECO:0000269" key="3">
    <source>
    </source>
</evidence>
<evidence type="ECO:0000305" key="4"/>
<feature type="chain" id="PRO_0000080498" description="Cyclin-T">
    <location>
        <begin position="1"/>
        <end position="1097"/>
    </location>
</feature>
<feature type="region of interest" description="Disordered" evidence="1">
    <location>
        <begin position="319"/>
        <end position="782"/>
    </location>
</feature>
<feature type="region of interest" description="Disordered" evidence="1">
    <location>
        <begin position="804"/>
        <end position="936"/>
    </location>
</feature>
<feature type="region of interest" description="Disordered" evidence="1">
    <location>
        <begin position="985"/>
        <end position="1097"/>
    </location>
</feature>
<feature type="compositionally biased region" description="Basic and acidic residues" evidence="1">
    <location>
        <begin position="332"/>
        <end position="350"/>
    </location>
</feature>
<feature type="compositionally biased region" description="Low complexity" evidence="1">
    <location>
        <begin position="373"/>
        <end position="390"/>
    </location>
</feature>
<feature type="compositionally biased region" description="Low complexity" evidence="1">
    <location>
        <begin position="420"/>
        <end position="456"/>
    </location>
</feature>
<feature type="compositionally biased region" description="Low complexity" evidence="1">
    <location>
        <begin position="467"/>
        <end position="478"/>
    </location>
</feature>
<feature type="compositionally biased region" description="Low complexity" evidence="1">
    <location>
        <begin position="489"/>
        <end position="511"/>
    </location>
</feature>
<feature type="compositionally biased region" description="Polar residues" evidence="1">
    <location>
        <begin position="580"/>
        <end position="591"/>
    </location>
</feature>
<feature type="compositionally biased region" description="Low complexity" evidence="1">
    <location>
        <begin position="592"/>
        <end position="606"/>
    </location>
</feature>
<feature type="compositionally biased region" description="Polar residues" evidence="1">
    <location>
        <begin position="609"/>
        <end position="620"/>
    </location>
</feature>
<feature type="compositionally biased region" description="Basic and acidic residues" evidence="1">
    <location>
        <begin position="652"/>
        <end position="675"/>
    </location>
</feature>
<feature type="compositionally biased region" description="Low complexity" evidence="1">
    <location>
        <begin position="687"/>
        <end position="698"/>
    </location>
</feature>
<feature type="compositionally biased region" description="Basic and acidic residues" evidence="1">
    <location>
        <begin position="860"/>
        <end position="870"/>
    </location>
</feature>
<feature type="compositionally biased region" description="Basic residues" evidence="1">
    <location>
        <begin position="871"/>
        <end position="883"/>
    </location>
</feature>
<feature type="compositionally biased region" description="Basic and acidic residues" evidence="1">
    <location>
        <begin position="884"/>
        <end position="895"/>
    </location>
</feature>
<feature type="compositionally biased region" description="Gly residues" evidence="1">
    <location>
        <begin position="993"/>
        <end position="1007"/>
    </location>
</feature>
<feature type="compositionally biased region" description="Basic and acidic residues" evidence="1">
    <location>
        <begin position="1016"/>
        <end position="1031"/>
    </location>
</feature>
<feature type="compositionally biased region" description="Gly residues" evidence="1">
    <location>
        <begin position="1037"/>
        <end position="1050"/>
    </location>
</feature>
<feature type="compositionally biased region" description="Pro residues" evidence="1">
    <location>
        <begin position="1087"/>
        <end position="1097"/>
    </location>
</feature>
<feature type="modified residue" description="Phosphoserine" evidence="2">
    <location>
        <position position="916"/>
    </location>
</feature>
<feature type="splice variant" id="VSP_010290" description="In isoform A." evidence="4">
    <location>
        <begin position="1"/>
        <end position="213"/>
    </location>
</feature>
<feature type="sequence conflict" description="In Ref. 1; AAC73052." evidence="4" ref="1">
    <original>S</original>
    <variation>L</variation>
    <location>
        <position position="55"/>
    </location>
</feature>
<feature type="sequence conflict" description="In Ref. 1; AAC73052." evidence="4" ref="1">
    <original>D</original>
    <variation>E</variation>
    <location>
        <position position="403"/>
    </location>
</feature>
<feature type="sequence conflict" description="In Ref. 1; AAC73052." evidence="4" ref="1">
    <original>T</original>
    <variation>P</variation>
    <location>
        <position position="406"/>
    </location>
</feature>
<feature type="sequence conflict" description="In Ref. 1; AAC73052." evidence="4" ref="1">
    <original>R</original>
    <variation>H</variation>
    <location>
        <position position="440"/>
    </location>
</feature>
<feature type="sequence conflict" description="In Ref. 1; AAC73052." evidence="4" ref="1">
    <original>P</original>
    <variation>H</variation>
    <location>
        <position position="575"/>
    </location>
</feature>
<feature type="sequence conflict" description="In Ref. 1; AAC73052." evidence="4" ref="1">
    <original>P</original>
    <variation>L</variation>
    <location>
        <position position="639"/>
    </location>
</feature>
<feature type="sequence conflict" description="In Ref. 1; AAC73052." evidence="4" ref="1">
    <original>V</original>
    <variation>M</variation>
    <location>
        <position position="686"/>
    </location>
</feature>
<feature type="sequence conflict" description="In Ref. 1; AAC73052." evidence="4" ref="1">
    <original>K</original>
    <variation>R</variation>
    <location>
        <position position="901"/>
    </location>
</feature>
<organism>
    <name type="scientific">Drosophila melanogaster</name>
    <name type="common">Fruit fly</name>
    <dbReference type="NCBI Taxonomy" id="7227"/>
    <lineage>
        <taxon>Eukaryota</taxon>
        <taxon>Metazoa</taxon>
        <taxon>Ecdysozoa</taxon>
        <taxon>Arthropoda</taxon>
        <taxon>Hexapoda</taxon>
        <taxon>Insecta</taxon>
        <taxon>Pterygota</taxon>
        <taxon>Neoptera</taxon>
        <taxon>Endopterygota</taxon>
        <taxon>Diptera</taxon>
        <taxon>Brachycera</taxon>
        <taxon>Muscomorpha</taxon>
        <taxon>Ephydroidea</taxon>
        <taxon>Drosophilidae</taxon>
        <taxon>Drosophila</taxon>
        <taxon>Sophophora</taxon>
    </lineage>
</organism>
<gene>
    <name type="primary">CycT</name>
    <name type="ORF">CG6292</name>
</gene>
<accession>O96433</accession>
<accession>Q9VVI6</accession>
<name>CCNT_DROME</name>
<comment type="function">
    <text>Regulatory subunit of the cyclin-dependent kinase pair (CDK9/cyclin T) complex, also called positive transcription elongation factor B (P-TEFb), which is proposed to facilitate the transition from abortive to production elongation by phosphorylating the CTD (carboxy-terminal domain) of the large subunit of RNA polymerase II (RNAP II).</text>
</comment>
<comment type="subunit">
    <text evidence="3">Component of the super elongation complex (SEC), at least composed of Ell, Cdk9, cyclin-T (CycT), lilli and ear. Associates with CDK9 to form P-TEFb.</text>
</comment>
<comment type="interaction">
    <interactant intactId="EBI-191577">
        <id>O96433</id>
    </interactant>
    <interactant intactId="EBI-100284">
        <id>O17432</id>
        <label>Cdk9</label>
    </interactant>
    <organismsDiffer>false</organismsDiffer>
    <experiments>3</experiments>
</comment>
<comment type="subcellular location">
    <subcellularLocation>
        <location evidence="4">Nucleus</location>
    </subcellularLocation>
</comment>
<comment type="alternative products">
    <event type="alternative splicing"/>
    <isoform>
        <id>O96433-1</id>
        <name>B</name>
        <sequence type="displayed"/>
    </isoform>
    <isoform>
        <id>O96433-2</id>
        <name>A</name>
        <sequence type="described" ref="VSP_010290"/>
    </isoform>
</comment>
<comment type="similarity">
    <text evidence="4">Belongs to the cyclin family. Cyclin C subfamily.</text>
</comment>
<keyword id="KW-0025">Alternative splicing</keyword>
<keyword id="KW-0195">Cyclin</keyword>
<keyword id="KW-0539">Nucleus</keyword>
<keyword id="KW-0597">Phosphoprotein</keyword>
<keyword id="KW-1185">Reference proteome</keyword>
<keyword id="KW-0804">Transcription</keyword>
<keyword id="KW-0805">Transcription regulation</keyword>
<reference key="1">
    <citation type="journal article" date="1998" name="J. Biol. Chem.">
        <title>Identification of a cyclin subunit required for the function of Drosophila P-TEFb.</title>
        <authorList>
            <person name="Peng J.-M."/>
            <person name="Marshall N.F."/>
            <person name="Price D.H."/>
        </authorList>
    </citation>
    <scope>NUCLEOTIDE SEQUENCE [MRNA] (ISOFORM B)</scope>
</reference>
<reference key="2">
    <citation type="journal article" date="2000" name="Science">
        <title>The genome sequence of Drosophila melanogaster.</title>
        <authorList>
            <person name="Adams M.D."/>
            <person name="Celniker S.E."/>
            <person name="Holt R.A."/>
            <person name="Evans C.A."/>
            <person name="Gocayne J.D."/>
            <person name="Amanatides P.G."/>
            <person name="Scherer S.E."/>
            <person name="Li P.W."/>
            <person name="Hoskins R.A."/>
            <person name="Galle R.F."/>
            <person name="George R.A."/>
            <person name="Lewis S.E."/>
            <person name="Richards S."/>
            <person name="Ashburner M."/>
            <person name="Henderson S.N."/>
            <person name="Sutton G.G."/>
            <person name="Wortman J.R."/>
            <person name="Yandell M.D."/>
            <person name="Zhang Q."/>
            <person name="Chen L.X."/>
            <person name="Brandon R.C."/>
            <person name="Rogers Y.-H.C."/>
            <person name="Blazej R.G."/>
            <person name="Champe M."/>
            <person name="Pfeiffer B.D."/>
            <person name="Wan K.H."/>
            <person name="Doyle C."/>
            <person name="Baxter E.G."/>
            <person name="Helt G."/>
            <person name="Nelson C.R."/>
            <person name="Miklos G.L.G."/>
            <person name="Abril J.F."/>
            <person name="Agbayani A."/>
            <person name="An H.-J."/>
            <person name="Andrews-Pfannkoch C."/>
            <person name="Baldwin D."/>
            <person name="Ballew R.M."/>
            <person name="Basu A."/>
            <person name="Baxendale J."/>
            <person name="Bayraktaroglu L."/>
            <person name="Beasley E.M."/>
            <person name="Beeson K.Y."/>
            <person name="Benos P.V."/>
            <person name="Berman B.P."/>
            <person name="Bhandari D."/>
            <person name="Bolshakov S."/>
            <person name="Borkova D."/>
            <person name="Botchan M.R."/>
            <person name="Bouck J."/>
            <person name="Brokstein P."/>
            <person name="Brottier P."/>
            <person name="Burtis K.C."/>
            <person name="Busam D.A."/>
            <person name="Butler H."/>
            <person name="Cadieu E."/>
            <person name="Center A."/>
            <person name="Chandra I."/>
            <person name="Cherry J.M."/>
            <person name="Cawley S."/>
            <person name="Dahlke C."/>
            <person name="Davenport L.B."/>
            <person name="Davies P."/>
            <person name="de Pablos B."/>
            <person name="Delcher A."/>
            <person name="Deng Z."/>
            <person name="Mays A.D."/>
            <person name="Dew I."/>
            <person name="Dietz S.M."/>
            <person name="Dodson K."/>
            <person name="Doup L.E."/>
            <person name="Downes M."/>
            <person name="Dugan-Rocha S."/>
            <person name="Dunkov B.C."/>
            <person name="Dunn P."/>
            <person name="Durbin K.J."/>
            <person name="Evangelista C.C."/>
            <person name="Ferraz C."/>
            <person name="Ferriera S."/>
            <person name="Fleischmann W."/>
            <person name="Fosler C."/>
            <person name="Gabrielian A.E."/>
            <person name="Garg N.S."/>
            <person name="Gelbart W.M."/>
            <person name="Glasser K."/>
            <person name="Glodek A."/>
            <person name="Gong F."/>
            <person name="Gorrell J.H."/>
            <person name="Gu Z."/>
            <person name="Guan P."/>
            <person name="Harris M."/>
            <person name="Harris N.L."/>
            <person name="Harvey D.A."/>
            <person name="Heiman T.J."/>
            <person name="Hernandez J.R."/>
            <person name="Houck J."/>
            <person name="Hostin D."/>
            <person name="Houston K.A."/>
            <person name="Howland T.J."/>
            <person name="Wei M.-H."/>
            <person name="Ibegwam C."/>
            <person name="Jalali M."/>
            <person name="Kalush F."/>
            <person name="Karpen G.H."/>
            <person name="Ke Z."/>
            <person name="Kennison J.A."/>
            <person name="Ketchum K.A."/>
            <person name="Kimmel B.E."/>
            <person name="Kodira C.D."/>
            <person name="Kraft C.L."/>
            <person name="Kravitz S."/>
            <person name="Kulp D."/>
            <person name="Lai Z."/>
            <person name="Lasko P."/>
            <person name="Lei Y."/>
            <person name="Levitsky A.A."/>
            <person name="Li J.H."/>
            <person name="Li Z."/>
            <person name="Liang Y."/>
            <person name="Lin X."/>
            <person name="Liu X."/>
            <person name="Mattei B."/>
            <person name="McIntosh T.C."/>
            <person name="McLeod M.P."/>
            <person name="McPherson D."/>
            <person name="Merkulov G."/>
            <person name="Milshina N.V."/>
            <person name="Mobarry C."/>
            <person name="Morris J."/>
            <person name="Moshrefi A."/>
            <person name="Mount S.M."/>
            <person name="Moy M."/>
            <person name="Murphy B."/>
            <person name="Murphy L."/>
            <person name="Muzny D.M."/>
            <person name="Nelson D.L."/>
            <person name="Nelson D.R."/>
            <person name="Nelson K.A."/>
            <person name="Nixon K."/>
            <person name="Nusskern D.R."/>
            <person name="Pacleb J.M."/>
            <person name="Palazzolo M."/>
            <person name="Pittman G.S."/>
            <person name="Pan S."/>
            <person name="Pollard J."/>
            <person name="Puri V."/>
            <person name="Reese M.G."/>
            <person name="Reinert K."/>
            <person name="Remington K."/>
            <person name="Saunders R.D.C."/>
            <person name="Scheeler F."/>
            <person name="Shen H."/>
            <person name="Shue B.C."/>
            <person name="Siden-Kiamos I."/>
            <person name="Simpson M."/>
            <person name="Skupski M.P."/>
            <person name="Smith T.J."/>
            <person name="Spier E."/>
            <person name="Spradling A.C."/>
            <person name="Stapleton M."/>
            <person name="Strong R."/>
            <person name="Sun E."/>
            <person name="Svirskas R."/>
            <person name="Tector C."/>
            <person name="Turner R."/>
            <person name="Venter E."/>
            <person name="Wang A.H."/>
            <person name="Wang X."/>
            <person name="Wang Z.-Y."/>
            <person name="Wassarman D.A."/>
            <person name="Weinstock G.M."/>
            <person name="Weissenbach J."/>
            <person name="Williams S.M."/>
            <person name="Woodage T."/>
            <person name="Worley K.C."/>
            <person name="Wu D."/>
            <person name="Yang S."/>
            <person name="Yao Q.A."/>
            <person name="Ye J."/>
            <person name="Yeh R.-F."/>
            <person name="Zaveri J.S."/>
            <person name="Zhan M."/>
            <person name="Zhang G."/>
            <person name="Zhao Q."/>
            <person name="Zheng L."/>
            <person name="Zheng X.H."/>
            <person name="Zhong F.N."/>
            <person name="Zhong W."/>
            <person name="Zhou X."/>
            <person name="Zhu S.C."/>
            <person name="Zhu X."/>
            <person name="Smith H.O."/>
            <person name="Gibbs R.A."/>
            <person name="Myers E.W."/>
            <person name="Rubin G.M."/>
            <person name="Venter J.C."/>
        </authorList>
    </citation>
    <scope>NUCLEOTIDE SEQUENCE [LARGE SCALE GENOMIC DNA]</scope>
    <source>
        <strain>Berkeley</strain>
    </source>
</reference>
<reference key="3">
    <citation type="journal article" date="2002" name="Genome Biol.">
        <title>Annotation of the Drosophila melanogaster euchromatic genome: a systematic review.</title>
        <authorList>
            <person name="Misra S."/>
            <person name="Crosby M.A."/>
            <person name="Mungall C.J."/>
            <person name="Matthews B.B."/>
            <person name="Campbell K.S."/>
            <person name="Hradecky P."/>
            <person name="Huang Y."/>
            <person name="Kaminker J.S."/>
            <person name="Millburn G.H."/>
            <person name="Prochnik S.E."/>
            <person name="Smith C.D."/>
            <person name="Tupy J.L."/>
            <person name="Whitfield E.J."/>
            <person name="Bayraktaroglu L."/>
            <person name="Berman B.P."/>
            <person name="Bettencourt B.R."/>
            <person name="Celniker S.E."/>
            <person name="de Grey A.D.N.J."/>
            <person name="Drysdale R.A."/>
            <person name="Harris N.L."/>
            <person name="Richter J."/>
            <person name="Russo S."/>
            <person name="Schroeder A.J."/>
            <person name="Shu S.Q."/>
            <person name="Stapleton M."/>
            <person name="Yamada C."/>
            <person name="Ashburner M."/>
            <person name="Gelbart W.M."/>
            <person name="Rubin G.M."/>
            <person name="Lewis S.E."/>
        </authorList>
    </citation>
    <scope>GENOME REANNOTATION</scope>
    <scope>ALTERNATIVE SPLICING</scope>
    <source>
        <strain>Berkeley</strain>
    </source>
</reference>
<reference key="4">
    <citation type="journal article" date="2008" name="J. Proteome Res.">
        <title>Phosphoproteome analysis of Drosophila melanogaster embryos.</title>
        <authorList>
            <person name="Zhai B."/>
            <person name="Villen J."/>
            <person name="Beausoleil S.A."/>
            <person name="Mintseris J."/>
            <person name="Gygi S.P."/>
        </authorList>
    </citation>
    <scope>PHOSPHORYLATION [LARGE SCALE ANALYSIS] AT SER-916</scope>
    <scope>IDENTIFICATION BY MASS SPECTROMETRY</scope>
    <source>
        <tissue>Embryo</tissue>
    </source>
</reference>
<reference key="5">
    <citation type="journal article" date="2011" name="Mol. Cell">
        <title>The little elongation complex regulates small nuclear RNA transcription.</title>
        <authorList>
            <person name="Smith E.R."/>
            <person name="Lin C."/>
            <person name="Garrett A.S."/>
            <person name="Thornton J."/>
            <person name="Mohaghegh N."/>
            <person name="Hu D."/>
            <person name="Jackson J."/>
            <person name="Saraf A."/>
            <person name="Swanson S.K."/>
            <person name="Seidel C."/>
            <person name="Florens L."/>
            <person name="Washburn M.P."/>
            <person name="Eissenberg J.C."/>
            <person name="Shilatifard A."/>
        </authorList>
    </citation>
    <scope>IDENTIFICATION IN THE SEC COMPLEX</scope>
</reference>
<sequence>MSLLATPMPQAATASSSSSASAAASASGIPITANNNLPFEKDKIWYFSNDQLANSPSRRCGIKGDDELQYRQMTAYLIQEMGQRLQVSQLCINTAIVYMHRFYAFHSFTHFHRNSMASASLFLAAKVEEQPRKLEHVIRAANKCLPPTTEQNYAELAQELVFNENVLLQTLGFDVAIDHPHTHVVRTCQLVKACKDLAQTSYFLASNSLHLTSMCLQYRPTVVACFCIYLACKWSRWEIPQSTEGKHWFYYVDKTVSLDLLKQLTDEFIAIYEKSPARLKSKLNSIKAIAQGASNRTANSKDKPKEDWKITEMMKGYHSNITTPPELLNGNDSRDRDRDRERERERERDPSSLLPPPAMVPQQRRQDGGHQRSSSVSGVPGSSSSSSSSSHKMPNYPGGMPPDAHTDHKSKQPGYNNRMPSSHQRSSSSGLGSSGSGSQRSSSSSSSSSQQPGRPSMPVDYHKSSRGMPPVGVGMPPHGSHKMTSGSKPQQPQQQPVPHPSASNSSASGMSSKDKSQSNKMYPNAPPPYSNSAPQNPLMSRGGYPGASNGSQPPPPAGYGGHRSKSGSTVHGMPPFEQQLPYSQSQSYGHMQQQPVPQSQQQQMPPEASQHSLQSKNSLFSPEWPDIKKEPMSQSQPQPFNGLLPPPAPPGHDYKLNSHPRDKESPKKERLTPTKKDKHRPVMPPVGSGNSSSGSGSSKPMLPPHKKQIPHGGDLLTNPGESGSLKRPNEISGSQYGLNKLDEIDNSNMPREKLRKLDTTTGLPTYPNYEEKHTPLNMSNGIETTPDLVRSLLKESLCPSNASLLKPDALTMPGLKPPAELLEPMPAPATIKKEQGITPMTSLASGPAPMDLEVPTKQAGEIKEESSSKSEKKKKKDKHKHKEKDKSKDKTEKEERKKHKKDKQKDRSGSGGSKDSSLPNEPLKMVIKNPNGSLQAGASAPIKLKISKNKVEPNNYSAAAGLPGAIGYGLPPTTATTTSASIGAAAPVLPPYGAGGGGYSSSGGSSSGGSSKKKHSDRDRDKESKKNKSQDYAKYNGAGGGIFNPLGGAGAAPNMSGGMGAPMSTAVPPSMLLAPTGAVPPSAAGLAPPPMPVYNKK</sequence>